<gene>
    <name evidence="1" type="primary">ycf4</name>
    <name type="ordered locus">tll1388</name>
</gene>
<accession>Q8DJ41</accession>
<evidence type="ECO:0000255" key="1">
    <source>
        <dbReference type="HAMAP-Rule" id="MF_00437"/>
    </source>
</evidence>
<dbReference type="EMBL" id="BA000039">
    <property type="protein sequence ID" value="BAC08940.1"/>
    <property type="molecule type" value="Genomic_DNA"/>
</dbReference>
<dbReference type="RefSeq" id="NP_682178.1">
    <property type="nucleotide sequence ID" value="NC_004113.1"/>
</dbReference>
<dbReference type="RefSeq" id="WP_011057228.1">
    <property type="nucleotide sequence ID" value="NC_004113.1"/>
</dbReference>
<dbReference type="STRING" id="197221.gene:10747986"/>
<dbReference type="EnsemblBacteria" id="BAC08940">
    <property type="protein sequence ID" value="BAC08940"/>
    <property type="gene ID" value="BAC08940"/>
</dbReference>
<dbReference type="KEGG" id="tel:tll1388"/>
<dbReference type="PATRIC" id="fig|197221.4.peg.1460"/>
<dbReference type="eggNOG" id="ENOG502Z7YX">
    <property type="taxonomic scope" value="Bacteria"/>
</dbReference>
<dbReference type="Proteomes" id="UP000000440">
    <property type="component" value="Chromosome"/>
</dbReference>
<dbReference type="GO" id="GO:0009522">
    <property type="term" value="C:photosystem I"/>
    <property type="evidence" value="ECO:0007669"/>
    <property type="project" value="InterPro"/>
</dbReference>
<dbReference type="GO" id="GO:0031676">
    <property type="term" value="C:plasma membrane-derived thylakoid membrane"/>
    <property type="evidence" value="ECO:0007669"/>
    <property type="project" value="UniProtKB-SubCell"/>
</dbReference>
<dbReference type="GO" id="GO:0015979">
    <property type="term" value="P:photosynthesis"/>
    <property type="evidence" value="ECO:0007669"/>
    <property type="project" value="UniProtKB-UniRule"/>
</dbReference>
<dbReference type="HAMAP" id="MF_00437">
    <property type="entry name" value="Ycf4"/>
    <property type="match status" value="1"/>
</dbReference>
<dbReference type="InterPro" id="IPR003359">
    <property type="entry name" value="PSI_Ycf4_assembly"/>
</dbReference>
<dbReference type="NCBIfam" id="NF002712">
    <property type="entry name" value="PRK02542.1"/>
    <property type="match status" value="1"/>
</dbReference>
<dbReference type="Pfam" id="PF02392">
    <property type="entry name" value="Ycf4"/>
    <property type="match status" value="1"/>
</dbReference>
<sequence>MTNSPITEPSPRQESVLRYPVLGSRRPSNYFWATAVSIGGLGFFLAGLSSYLHRNLLPIGNPIDLVFIPQGIAIGFYGVAALLLATYLWLAIAWDVGGGFNEFNKETGFVRIFRWGFPGKNRQIEVSCPISDVQAVKIVIKEGLNPKRSLYLKIKGRGEVPLTRVGAPLPLAELETQGATIASFLGVPVEGL</sequence>
<proteinExistence type="inferred from homology"/>
<name>YCF4_THEVB</name>
<keyword id="KW-0472">Membrane</keyword>
<keyword id="KW-0602">Photosynthesis</keyword>
<keyword id="KW-1185">Reference proteome</keyword>
<keyword id="KW-0793">Thylakoid</keyword>
<keyword id="KW-0812">Transmembrane</keyword>
<keyword id="KW-1133">Transmembrane helix</keyword>
<feature type="chain" id="PRO_0000217637" description="Photosystem I assembly protein Ycf4">
    <location>
        <begin position="1"/>
        <end position="192"/>
    </location>
</feature>
<feature type="transmembrane region" description="Helical" evidence="1">
    <location>
        <begin position="30"/>
        <end position="52"/>
    </location>
</feature>
<feature type="transmembrane region" description="Helical" evidence="1">
    <location>
        <begin position="72"/>
        <end position="94"/>
    </location>
</feature>
<organism>
    <name type="scientific">Thermosynechococcus vestitus (strain NIES-2133 / IAM M-273 / BP-1)</name>
    <dbReference type="NCBI Taxonomy" id="197221"/>
    <lineage>
        <taxon>Bacteria</taxon>
        <taxon>Bacillati</taxon>
        <taxon>Cyanobacteriota</taxon>
        <taxon>Cyanophyceae</taxon>
        <taxon>Acaryochloridales</taxon>
        <taxon>Thermosynechococcaceae</taxon>
        <taxon>Thermosynechococcus</taxon>
    </lineage>
</organism>
<reference key="1">
    <citation type="journal article" date="2002" name="DNA Res.">
        <title>Complete genome structure of the thermophilic cyanobacterium Thermosynechococcus elongatus BP-1.</title>
        <authorList>
            <person name="Nakamura Y."/>
            <person name="Kaneko T."/>
            <person name="Sato S."/>
            <person name="Ikeuchi M."/>
            <person name="Katoh H."/>
            <person name="Sasamoto S."/>
            <person name="Watanabe A."/>
            <person name="Iriguchi M."/>
            <person name="Kawashima K."/>
            <person name="Kimura T."/>
            <person name="Kishida Y."/>
            <person name="Kiyokawa C."/>
            <person name="Kohara M."/>
            <person name="Matsumoto M."/>
            <person name="Matsuno A."/>
            <person name="Nakazaki N."/>
            <person name="Shimpo S."/>
            <person name="Sugimoto M."/>
            <person name="Takeuchi C."/>
            <person name="Yamada M."/>
            <person name="Tabata S."/>
        </authorList>
    </citation>
    <scope>NUCLEOTIDE SEQUENCE [LARGE SCALE GENOMIC DNA]</scope>
    <source>
        <strain>NIES-2133 / IAM M-273 / BP-1</strain>
    </source>
</reference>
<comment type="function">
    <text evidence="1">Seems to be required for the assembly of the photosystem I complex.</text>
</comment>
<comment type="subcellular location">
    <subcellularLocation>
        <location evidence="1">Cellular thylakoid membrane</location>
        <topology evidence="1">Multi-pass membrane protein</topology>
    </subcellularLocation>
</comment>
<comment type="similarity">
    <text evidence="1">Belongs to the Ycf4 family.</text>
</comment>
<protein>
    <recommendedName>
        <fullName evidence="1">Photosystem I assembly protein Ycf4</fullName>
    </recommendedName>
</protein>